<gene>
    <name evidence="1" type="primary">accA</name>
    <name type="ordered locus">SA1522</name>
</gene>
<sequence>MLDFEKPLFEIRNKIESLKESQDKNDVDLQEEIDMLEASLERETKKIYTNLKPWDRVQIARLQERPTTLDYIPYIFDSFMELHGDRNFRDDPAMIGGIGFLNGRAVTVIGQQRGKDTKDNIYRNFGMAHPEGYRKALRLMKQAEKFNRPIFTFIDTKGAYPGKAAEERGQSESIATNLIEMASLKVPVIAIVIGEGGSGGALGIGIANKVLMLENSTYSVISPEGAAALLWKDSNLAKIAAETMKITAHDIKQLGIIDDVISEPLGGAHKDVEQQALAIKSAFVAQLDSLESLSRDEIANDRFEKFRNIGSYIE</sequence>
<dbReference type="EC" id="2.1.3.15" evidence="1"/>
<dbReference type="EMBL" id="BA000018">
    <property type="protein sequence ID" value="BAB42789.1"/>
    <property type="molecule type" value="Genomic_DNA"/>
</dbReference>
<dbReference type="PIR" id="H89953">
    <property type="entry name" value="H89953"/>
</dbReference>
<dbReference type="RefSeq" id="WP_000883648.1">
    <property type="nucleotide sequence ID" value="NC_002745.2"/>
</dbReference>
<dbReference type="SMR" id="Q7A558"/>
<dbReference type="EnsemblBacteria" id="BAB42789">
    <property type="protein sequence ID" value="BAB42789"/>
    <property type="gene ID" value="BAB42789"/>
</dbReference>
<dbReference type="KEGG" id="sau:SA1522"/>
<dbReference type="HOGENOM" id="CLU_015486_0_2_9"/>
<dbReference type="UniPathway" id="UPA00655">
    <property type="reaction ID" value="UER00711"/>
</dbReference>
<dbReference type="GO" id="GO:0009317">
    <property type="term" value="C:acetyl-CoA carboxylase complex"/>
    <property type="evidence" value="ECO:0007669"/>
    <property type="project" value="InterPro"/>
</dbReference>
<dbReference type="GO" id="GO:0003989">
    <property type="term" value="F:acetyl-CoA carboxylase activity"/>
    <property type="evidence" value="ECO:0007669"/>
    <property type="project" value="InterPro"/>
</dbReference>
<dbReference type="GO" id="GO:0005524">
    <property type="term" value="F:ATP binding"/>
    <property type="evidence" value="ECO:0007669"/>
    <property type="project" value="UniProtKB-KW"/>
</dbReference>
<dbReference type="GO" id="GO:0016743">
    <property type="term" value="F:carboxyl- or carbamoyltransferase activity"/>
    <property type="evidence" value="ECO:0007669"/>
    <property type="project" value="UniProtKB-UniRule"/>
</dbReference>
<dbReference type="GO" id="GO:0006633">
    <property type="term" value="P:fatty acid biosynthetic process"/>
    <property type="evidence" value="ECO:0007669"/>
    <property type="project" value="UniProtKB-KW"/>
</dbReference>
<dbReference type="GO" id="GO:2001295">
    <property type="term" value="P:malonyl-CoA biosynthetic process"/>
    <property type="evidence" value="ECO:0007669"/>
    <property type="project" value="UniProtKB-UniRule"/>
</dbReference>
<dbReference type="Gene3D" id="3.90.226.10">
    <property type="entry name" value="2-enoyl-CoA Hydratase, Chain A, domain 1"/>
    <property type="match status" value="1"/>
</dbReference>
<dbReference type="HAMAP" id="MF_00823">
    <property type="entry name" value="AcetylCoA_CT_alpha"/>
    <property type="match status" value="1"/>
</dbReference>
<dbReference type="InterPro" id="IPR001095">
    <property type="entry name" value="Acetyl_CoA_COase_a_su"/>
</dbReference>
<dbReference type="InterPro" id="IPR029045">
    <property type="entry name" value="ClpP/crotonase-like_dom_sf"/>
</dbReference>
<dbReference type="InterPro" id="IPR011763">
    <property type="entry name" value="COA_CT_C"/>
</dbReference>
<dbReference type="NCBIfam" id="TIGR00513">
    <property type="entry name" value="accA"/>
    <property type="match status" value="1"/>
</dbReference>
<dbReference type="NCBIfam" id="NF041504">
    <property type="entry name" value="AccA_sub"/>
    <property type="match status" value="1"/>
</dbReference>
<dbReference type="NCBIfam" id="NF004344">
    <property type="entry name" value="PRK05724.1"/>
    <property type="match status" value="1"/>
</dbReference>
<dbReference type="PANTHER" id="PTHR42853">
    <property type="entry name" value="ACETYL-COENZYME A CARBOXYLASE CARBOXYL TRANSFERASE SUBUNIT ALPHA"/>
    <property type="match status" value="1"/>
</dbReference>
<dbReference type="PANTHER" id="PTHR42853:SF3">
    <property type="entry name" value="ACETYL-COENZYME A CARBOXYLASE CARBOXYL TRANSFERASE SUBUNIT ALPHA, CHLOROPLASTIC"/>
    <property type="match status" value="1"/>
</dbReference>
<dbReference type="Pfam" id="PF03255">
    <property type="entry name" value="ACCA"/>
    <property type="match status" value="1"/>
</dbReference>
<dbReference type="PRINTS" id="PR01069">
    <property type="entry name" value="ACCCTRFRASEA"/>
</dbReference>
<dbReference type="SUPFAM" id="SSF52096">
    <property type="entry name" value="ClpP/crotonase"/>
    <property type="match status" value="1"/>
</dbReference>
<dbReference type="PROSITE" id="PS50989">
    <property type="entry name" value="COA_CT_CTER"/>
    <property type="match status" value="1"/>
</dbReference>
<reference key="1">
    <citation type="journal article" date="2001" name="Lancet">
        <title>Whole genome sequencing of meticillin-resistant Staphylococcus aureus.</title>
        <authorList>
            <person name="Kuroda M."/>
            <person name="Ohta T."/>
            <person name="Uchiyama I."/>
            <person name="Baba T."/>
            <person name="Yuzawa H."/>
            <person name="Kobayashi I."/>
            <person name="Cui L."/>
            <person name="Oguchi A."/>
            <person name="Aoki K."/>
            <person name="Nagai Y."/>
            <person name="Lian J.-Q."/>
            <person name="Ito T."/>
            <person name="Kanamori M."/>
            <person name="Matsumaru H."/>
            <person name="Maruyama A."/>
            <person name="Murakami H."/>
            <person name="Hosoyama A."/>
            <person name="Mizutani-Ui Y."/>
            <person name="Takahashi N.K."/>
            <person name="Sawano T."/>
            <person name="Inoue R."/>
            <person name="Kaito C."/>
            <person name="Sekimizu K."/>
            <person name="Hirakawa H."/>
            <person name="Kuhara S."/>
            <person name="Goto S."/>
            <person name="Yabuzaki J."/>
            <person name="Kanehisa M."/>
            <person name="Yamashita A."/>
            <person name="Oshima K."/>
            <person name="Furuya K."/>
            <person name="Yoshino C."/>
            <person name="Shiba T."/>
            <person name="Hattori M."/>
            <person name="Ogasawara N."/>
            <person name="Hayashi H."/>
            <person name="Hiramatsu K."/>
        </authorList>
    </citation>
    <scope>NUCLEOTIDE SEQUENCE [LARGE SCALE GENOMIC DNA]</scope>
    <source>
        <strain>N315</strain>
    </source>
</reference>
<reference key="2">
    <citation type="submission" date="2007-10" db="UniProtKB">
        <title>Shotgun proteomic analysis of total and membrane protein extracts of S. aureus strain N315.</title>
        <authorList>
            <person name="Vaezzadeh A.R."/>
            <person name="Deshusses J."/>
            <person name="Lescuyer P."/>
            <person name="Hochstrasser D.F."/>
        </authorList>
    </citation>
    <scope>IDENTIFICATION BY MASS SPECTROMETRY [LARGE SCALE ANALYSIS]</scope>
    <source>
        <strain>N315</strain>
    </source>
</reference>
<keyword id="KW-0067">ATP-binding</keyword>
<keyword id="KW-0963">Cytoplasm</keyword>
<keyword id="KW-0275">Fatty acid biosynthesis</keyword>
<keyword id="KW-0276">Fatty acid metabolism</keyword>
<keyword id="KW-0444">Lipid biosynthesis</keyword>
<keyword id="KW-0443">Lipid metabolism</keyword>
<keyword id="KW-0547">Nucleotide-binding</keyword>
<keyword id="KW-0808">Transferase</keyword>
<evidence type="ECO:0000255" key="1">
    <source>
        <dbReference type="HAMAP-Rule" id="MF_00823"/>
    </source>
</evidence>
<evidence type="ECO:0000255" key="2">
    <source>
        <dbReference type="PROSITE-ProRule" id="PRU01137"/>
    </source>
</evidence>
<comment type="function">
    <text evidence="1">Component of the acetyl coenzyme A carboxylase (ACC) complex. First, biotin carboxylase catalyzes the carboxylation of biotin on its carrier protein (BCCP) and then the CO(2) group is transferred by the carboxyltransferase to acetyl-CoA to form malonyl-CoA.</text>
</comment>
<comment type="catalytic activity">
    <reaction evidence="1">
        <text>N(6)-carboxybiotinyl-L-lysyl-[protein] + acetyl-CoA = N(6)-biotinyl-L-lysyl-[protein] + malonyl-CoA</text>
        <dbReference type="Rhea" id="RHEA:54728"/>
        <dbReference type="Rhea" id="RHEA-COMP:10505"/>
        <dbReference type="Rhea" id="RHEA-COMP:10506"/>
        <dbReference type="ChEBI" id="CHEBI:57288"/>
        <dbReference type="ChEBI" id="CHEBI:57384"/>
        <dbReference type="ChEBI" id="CHEBI:83144"/>
        <dbReference type="ChEBI" id="CHEBI:83145"/>
        <dbReference type="EC" id="2.1.3.15"/>
    </reaction>
</comment>
<comment type="pathway">
    <text evidence="1">Lipid metabolism; malonyl-CoA biosynthesis; malonyl-CoA from acetyl-CoA: step 1/1.</text>
</comment>
<comment type="subunit">
    <text evidence="1">Acetyl-CoA carboxylase is a heterohexamer composed of biotin carboxyl carrier protein (AccB), biotin carboxylase (AccC) and two subunits each of ACCase subunit alpha (AccA) and ACCase subunit beta (AccD).</text>
</comment>
<comment type="subcellular location">
    <subcellularLocation>
        <location evidence="1">Cytoplasm</location>
    </subcellularLocation>
</comment>
<comment type="similarity">
    <text evidence="1">Belongs to the AccA family.</text>
</comment>
<feature type="chain" id="PRO_0000223831" description="Acetyl-coenzyme A carboxylase carboxyl transferase subunit alpha">
    <location>
        <begin position="1"/>
        <end position="314"/>
    </location>
</feature>
<feature type="domain" description="CoA carboxyltransferase C-terminal" evidence="2">
    <location>
        <begin position="32"/>
        <end position="289"/>
    </location>
</feature>
<proteinExistence type="evidence at protein level"/>
<accession>Q7A558</accession>
<organism>
    <name type="scientific">Staphylococcus aureus (strain N315)</name>
    <dbReference type="NCBI Taxonomy" id="158879"/>
    <lineage>
        <taxon>Bacteria</taxon>
        <taxon>Bacillati</taxon>
        <taxon>Bacillota</taxon>
        <taxon>Bacilli</taxon>
        <taxon>Bacillales</taxon>
        <taxon>Staphylococcaceae</taxon>
        <taxon>Staphylococcus</taxon>
    </lineage>
</organism>
<protein>
    <recommendedName>
        <fullName evidence="1">Acetyl-coenzyme A carboxylase carboxyl transferase subunit alpha</fullName>
        <shortName evidence="1">ACCase subunit alpha</shortName>
        <shortName evidence="1">Acetyl-CoA carboxylase carboxyltransferase subunit alpha</shortName>
        <ecNumber evidence="1">2.1.3.15</ecNumber>
    </recommendedName>
</protein>
<name>ACCA_STAAN</name>